<keyword id="KW-0002">3D-structure</keyword>
<keyword id="KW-0119">Carbohydrate metabolism</keyword>
<keyword id="KW-0299">Galactose metabolism</keyword>
<keyword id="KW-0413">Isomerase</keyword>
<keyword id="KW-0520">NAD</keyword>
<gene>
    <name type="primary">lnpD</name>
    <name type="ordered locus">BLLJ_1620</name>
</gene>
<organism>
    <name type="scientific">Bifidobacterium longum subsp. longum (strain ATCC 15707 / DSM 20219 / JCM 1217 / NCTC 11818 / E194b)</name>
    <dbReference type="NCBI Taxonomy" id="565042"/>
    <lineage>
        <taxon>Bacteria</taxon>
        <taxon>Bacillati</taxon>
        <taxon>Actinomycetota</taxon>
        <taxon>Actinomycetes</taxon>
        <taxon>Bifidobacteriales</taxon>
        <taxon>Bifidobacteriaceae</taxon>
        <taxon>Bifidobacterium</taxon>
    </lineage>
</organism>
<protein>
    <recommendedName>
        <fullName>UDP-glucose 4-epimerase</fullName>
        <ecNumber>5.1.3.2</ecNumber>
    </recommendedName>
    <alternativeName>
        <fullName>UDP-galactose 4-epimerase</fullName>
    </alternativeName>
</protein>
<comment type="function">
    <text evidence="2">Involved in the metabolism of galactose. Catalyzes the conversion of UDP-galactose (UDP-Gal) to UDP-glucose (UDP-Glc) through a mechanism involving the transient reduction of NAD. Can also epimerize UDP-GalNAc to UDP-GlcNAc. Involved in the lacto-N-biose I/galacto-N-biose (LNB/GNB) degradation pathway, which is important for host intestinal colonization by bifidobacteria.</text>
</comment>
<comment type="catalytic activity">
    <reaction evidence="2">
        <text>UDP-alpha-D-glucose = UDP-alpha-D-galactose</text>
        <dbReference type="Rhea" id="RHEA:22168"/>
        <dbReference type="ChEBI" id="CHEBI:58885"/>
        <dbReference type="ChEBI" id="CHEBI:66914"/>
        <dbReference type="EC" id="5.1.3.2"/>
    </reaction>
</comment>
<comment type="cofactor">
    <cofactor evidence="1">
        <name>NAD(+)</name>
        <dbReference type="ChEBI" id="CHEBI:57540"/>
    </cofactor>
</comment>
<comment type="pathway">
    <text evidence="2">Carbohydrate metabolism; galactose metabolism.</text>
</comment>
<comment type="subunit">
    <text evidence="1">Homodimer.</text>
</comment>
<comment type="similarity">
    <text evidence="3">Belongs to the NAD(P)-dependent epimerase/dehydratase family.</text>
</comment>
<feature type="chain" id="PRO_0000424073" description="UDP-glucose 4-epimerase">
    <location>
        <begin position="1"/>
        <end position="340"/>
    </location>
</feature>
<feature type="active site" description="Proton acceptor" evidence="1">
    <location>
        <position position="150"/>
    </location>
</feature>
<feature type="binding site" evidence="1">
    <location>
        <begin position="12"/>
        <end position="13"/>
    </location>
    <ligand>
        <name>NAD(+)</name>
        <dbReference type="ChEBI" id="CHEBI:57540"/>
    </ligand>
</feature>
<feature type="binding site" evidence="1">
    <location>
        <begin position="32"/>
        <end position="37"/>
    </location>
    <ligand>
        <name>NAD(+)</name>
        <dbReference type="ChEBI" id="CHEBI:57540"/>
    </ligand>
</feature>
<feature type="binding site" evidence="1">
    <location>
        <begin position="59"/>
        <end position="60"/>
    </location>
    <ligand>
        <name>NAD(+)</name>
        <dbReference type="ChEBI" id="CHEBI:57540"/>
    </ligand>
</feature>
<feature type="binding site" evidence="1">
    <location>
        <begin position="81"/>
        <end position="85"/>
    </location>
    <ligand>
        <name>NAD(+)</name>
        <dbReference type="ChEBI" id="CHEBI:57540"/>
    </ligand>
</feature>
<feature type="binding site" evidence="1">
    <location>
        <position position="100"/>
    </location>
    <ligand>
        <name>NAD(+)</name>
        <dbReference type="ChEBI" id="CHEBI:57540"/>
    </ligand>
</feature>
<feature type="binding site" evidence="1">
    <location>
        <position position="125"/>
    </location>
    <ligand>
        <name>NAD(+)</name>
        <dbReference type="ChEBI" id="CHEBI:57540"/>
    </ligand>
</feature>
<feature type="binding site" evidence="1">
    <location>
        <position position="125"/>
    </location>
    <ligand>
        <name>substrate</name>
    </ligand>
</feature>
<feature type="binding site" evidence="1">
    <location>
        <position position="150"/>
    </location>
    <ligand>
        <name>NAD(+)</name>
        <dbReference type="ChEBI" id="CHEBI:57540"/>
    </ligand>
</feature>
<feature type="binding site" evidence="1">
    <location>
        <position position="150"/>
    </location>
    <ligand>
        <name>substrate</name>
    </ligand>
</feature>
<feature type="binding site" evidence="1">
    <location>
        <position position="154"/>
    </location>
    <ligand>
        <name>NAD(+)</name>
        <dbReference type="ChEBI" id="CHEBI:57540"/>
    </ligand>
</feature>
<feature type="binding site" evidence="1">
    <location>
        <position position="179"/>
    </location>
    <ligand>
        <name>NAD(+)</name>
        <dbReference type="ChEBI" id="CHEBI:57540"/>
    </ligand>
</feature>
<feature type="binding site" evidence="1">
    <location>
        <position position="180"/>
    </location>
    <ligand>
        <name>substrate</name>
    </ligand>
</feature>
<feature type="binding site" evidence="1">
    <location>
        <begin position="200"/>
        <end position="201"/>
    </location>
    <ligand>
        <name>substrate</name>
    </ligand>
</feature>
<feature type="binding site" evidence="1">
    <location>
        <begin position="217"/>
        <end position="219"/>
    </location>
    <ligand>
        <name>substrate</name>
    </ligand>
</feature>
<feature type="binding site" evidence="1">
    <location>
        <position position="232"/>
    </location>
    <ligand>
        <name>substrate</name>
    </ligand>
</feature>
<feature type="binding site" evidence="1">
    <location>
        <begin position="292"/>
        <end position="295"/>
    </location>
    <ligand>
        <name>substrate</name>
    </ligand>
</feature>
<feature type="strand" evidence="4">
    <location>
        <begin position="3"/>
        <end position="7"/>
    </location>
</feature>
<feature type="turn" evidence="4">
    <location>
        <begin position="8"/>
        <end position="10"/>
    </location>
</feature>
<feature type="helix" evidence="4">
    <location>
        <begin position="12"/>
        <end position="23"/>
    </location>
</feature>
<feature type="strand" evidence="4">
    <location>
        <begin position="27"/>
        <end position="32"/>
    </location>
</feature>
<feature type="strand" evidence="4">
    <location>
        <begin position="35"/>
        <end position="37"/>
    </location>
</feature>
<feature type="helix" evidence="4">
    <location>
        <begin position="40"/>
        <end position="49"/>
    </location>
</feature>
<feature type="strand" evidence="4">
    <location>
        <begin position="54"/>
        <end position="58"/>
    </location>
</feature>
<feature type="helix" evidence="4">
    <location>
        <begin position="63"/>
        <end position="72"/>
    </location>
</feature>
<feature type="strand" evidence="4">
    <location>
        <begin position="76"/>
        <end position="80"/>
    </location>
</feature>
<feature type="helix" evidence="4">
    <location>
        <begin position="87"/>
        <end position="92"/>
    </location>
</feature>
<feature type="helix" evidence="4">
    <location>
        <begin position="94"/>
        <end position="114"/>
    </location>
</feature>
<feature type="strand" evidence="4">
    <location>
        <begin position="119"/>
        <end position="125"/>
    </location>
</feature>
<feature type="helix" evidence="4">
    <location>
        <begin position="126"/>
        <end position="129"/>
    </location>
</feature>
<feature type="strand" evidence="4">
    <location>
        <begin position="133"/>
        <end position="137"/>
    </location>
</feature>
<feature type="helix" evidence="4">
    <location>
        <begin position="149"/>
        <end position="167"/>
    </location>
</feature>
<feature type="strand" evidence="4">
    <location>
        <begin position="172"/>
        <end position="178"/>
    </location>
</feature>
<feature type="strand" evidence="4">
    <location>
        <begin position="180"/>
        <end position="182"/>
    </location>
</feature>
<feature type="strand" evidence="5">
    <location>
        <begin position="188"/>
        <end position="190"/>
    </location>
</feature>
<feature type="strand" evidence="4">
    <location>
        <begin position="195"/>
        <end position="197"/>
    </location>
</feature>
<feature type="helix" evidence="4">
    <location>
        <begin position="201"/>
        <end position="209"/>
    </location>
</feature>
<feature type="strand" evidence="4">
    <location>
        <begin position="212"/>
        <end position="214"/>
    </location>
</feature>
<feature type="strand" evidence="4">
    <location>
        <begin position="216"/>
        <end position="219"/>
    </location>
</feature>
<feature type="strand" evidence="4">
    <location>
        <begin position="223"/>
        <end position="229"/>
    </location>
</feature>
<feature type="strand" evidence="4">
    <location>
        <begin position="231"/>
        <end position="236"/>
    </location>
</feature>
<feature type="helix" evidence="4">
    <location>
        <begin position="237"/>
        <end position="250"/>
    </location>
</feature>
<feature type="strand" evidence="4">
    <location>
        <begin position="255"/>
        <end position="261"/>
    </location>
</feature>
<feature type="strand" evidence="4">
    <location>
        <begin position="266"/>
        <end position="268"/>
    </location>
</feature>
<feature type="helix" evidence="4">
    <location>
        <begin position="269"/>
        <end position="280"/>
    </location>
</feature>
<feature type="strand" evidence="4">
    <location>
        <begin position="286"/>
        <end position="289"/>
    </location>
</feature>
<feature type="strand" evidence="4">
    <location>
        <begin position="297"/>
        <end position="299"/>
    </location>
</feature>
<feature type="helix" evidence="4">
    <location>
        <begin position="304"/>
        <end position="310"/>
    </location>
</feature>
<feature type="helix" evidence="4">
    <location>
        <begin position="318"/>
        <end position="331"/>
    </location>
</feature>
<proteinExistence type="evidence at protein level"/>
<dbReference type="EC" id="5.1.3.2"/>
<dbReference type="EMBL" id="AB303839">
    <property type="protein sequence ID" value="BAF73927.1"/>
    <property type="molecule type" value="Genomic_DNA"/>
</dbReference>
<dbReference type="EMBL" id="AP010888">
    <property type="protein sequence ID" value="BAJ67287.1"/>
    <property type="molecule type" value="Genomic_DNA"/>
</dbReference>
<dbReference type="PDB" id="6K0G">
    <property type="method" value="X-ray"/>
    <property type="resolution" value="1.80 A"/>
    <property type="chains" value="A=1-340"/>
</dbReference>
<dbReference type="PDB" id="6K0H">
    <property type="method" value="X-ray"/>
    <property type="resolution" value="2.00 A"/>
    <property type="chains" value="A=1-340"/>
</dbReference>
<dbReference type="PDB" id="6K0I">
    <property type="method" value="X-ray"/>
    <property type="resolution" value="1.80 A"/>
    <property type="chains" value="A=1-340"/>
</dbReference>
<dbReference type="PDBsum" id="6K0G"/>
<dbReference type="PDBsum" id="6K0H"/>
<dbReference type="PDBsum" id="6K0I"/>
<dbReference type="SMR" id="E8MF10"/>
<dbReference type="GeneID" id="69578836"/>
<dbReference type="KEGG" id="blm:BLLJ_1620"/>
<dbReference type="HOGENOM" id="CLU_007383_1_10_11"/>
<dbReference type="UniPathway" id="UPA00214"/>
<dbReference type="GO" id="GO:0005829">
    <property type="term" value="C:cytosol"/>
    <property type="evidence" value="ECO:0007669"/>
    <property type="project" value="TreeGrafter"/>
</dbReference>
<dbReference type="GO" id="GO:0003978">
    <property type="term" value="F:UDP-glucose 4-epimerase activity"/>
    <property type="evidence" value="ECO:0000314"/>
    <property type="project" value="UniProtKB"/>
</dbReference>
<dbReference type="GO" id="GO:0005975">
    <property type="term" value="P:carbohydrate metabolic process"/>
    <property type="evidence" value="ECO:0000314"/>
    <property type="project" value="UniProtKB"/>
</dbReference>
<dbReference type="GO" id="GO:0006012">
    <property type="term" value="P:galactose metabolic process"/>
    <property type="evidence" value="ECO:0007669"/>
    <property type="project" value="UniProtKB-UniPathway"/>
</dbReference>
<dbReference type="CDD" id="cd05247">
    <property type="entry name" value="UDP_G4E_1_SDR_e"/>
    <property type="match status" value="1"/>
</dbReference>
<dbReference type="FunFam" id="3.40.50.720:FF:000373">
    <property type="entry name" value="UDP-glucose 4-epimerase"/>
    <property type="match status" value="1"/>
</dbReference>
<dbReference type="Gene3D" id="3.40.50.720">
    <property type="entry name" value="NAD(P)-binding Rossmann-like Domain"/>
    <property type="match status" value="1"/>
</dbReference>
<dbReference type="Gene3D" id="3.90.25.10">
    <property type="entry name" value="UDP-galactose 4-epimerase, domain 1"/>
    <property type="match status" value="1"/>
</dbReference>
<dbReference type="InterPro" id="IPR016040">
    <property type="entry name" value="NAD(P)-bd_dom"/>
</dbReference>
<dbReference type="InterPro" id="IPR036291">
    <property type="entry name" value="NAD(P)-bd_dom_sf"/>
</dbReference>
<dbReference type="InterPro" id="IPR005886">
    <property type="entry name" value="UDP_G4E"/>
</dbReference>
<dbReference type="NCBIfam" id="TIGR01179">
    <property type="entry name" value="galE"/>
    <property type="match status" value="1"/>
</dbReference>
<dbReference type="NCBIfam" id="NF007956">
    <property type="entry name" value="PRK10675.1"/>
    <property type="match status" value="1"/>
</dbReference>
<dbReference type="PANTHER" id="PTHR43725">
    <property type="entry name" value="UDP-GLUCOSE 4-EPIMERASE"/>
    <property type="match status" value="1"/>
</dbReference>
<dbReference type="PANTHER" id="PTHR43725:SF47">
    <property type="entry name" value="UDP-GLUCOSE 4-EPIMERASE"/>
    <property type="match status" value="1"/>
</dbReference>
<dbReference type="Pfam" id="PF16363">
    <property type="entry name" value="GDP_Man_Dehyd"/>
    <property type="match status" value="1"/>
</dbReference>
<dbReference type="PRINTS" id="PR01713">
    <property type="entry name" value="NUCEPIMERASE"/>
</dbReference>
<dbReference type="SUPFAM" id="SSF51735">
    <property type="entry name" value="NAD(P)-binding Rossmann-fold domains"/>
    <property type="match status" value="1"/>
</dbReference>
<evidence type="ECO:0000250" key="1"/>
<evidence type="ECO:0000269" key="2">
    <source>
    </source>
</evidence>
<evidence type="ECO:0000305" key="3"/>
<evidence type="ECO:0007829" key="4">
    <source>
        <dbReference type="PDB" id="6K0G"/>
    </source>
</evidence>
<evidence type="ECO:0007829" key="5">
    <source>
        <dbReference type="PDB" id="6K0I"/>
    </source>
</evidence>
<accession>E8MF10</accession>
<accession>A7BJ83</accession>
<name>GALE_BIFL2</name>
<sequence>MTTVLVTGGAGFIATHTDIELLNKGYDVISVDNYGNSSPVALERVEQITGKPVKRYDGDVRDEALMERVFAENNIDWVIHFAGLKAVGESVAKPIEYYDNNLYSTLVLLKVMKKHNVKKIIFSSSATVYGTPKELPITEETPTGGTTNPYGTSKLFQEQILRDVHVADPSWTIVLLRYFNPVGAHESGLLGEDPKGIPANLTPYVAKVAVGELKEVQVYGDDYDTPDGTGVRDYIHVVDLAKGHVAVIDHIDKEGVFVYNLGTGHGYSVLEVIKAYEKAAGHPIPYAIKPRRPGDIAACYADASKAEKELGWKAELTIDDMAASSLNWQTKNPNGFRDAE</sequence>
<reference key="1">
    <citation type="journal article" date="2007" name="Appl. Environ. Microbiol.">
        <title>Identification of N-acetylhexosamine 1-kinase in the complete lacto-N-biose I/galacto-N-biose metabolic pathway in Bifidobacterium longum.</title>
        <authorList>
            <person name="Nishimoto M."/>
            <person name="Kitaoka M."/>
        </authorList>
    </citation>
    <scope>NUCLEOTIDE SEQUENCE [GENOMIC DNA]</scope>
    <scope>FUNCTION</scope>
    <scope>CATALYTIC ACTIVITY</scope>
    <scope>PATHWAY</scope>
    <source>
        <strain>ATCC 15707 / DSM 20219 / CCUG 28903 / JCM 1217 / NCIMB 702259 / NCTC 11818 / E194b</strain>
    </source>
</reference>
<reference key="2">
    <citation type="journal article" date="2011" name="Nature">
        <title>Bifidobacteria can protect from enteropathogenic infection through production of acetate.</title>
        <authorList>
            <person name="Fukuda S."/>
            <person name="Toh H."/>
            <person name="Hase K."/>
            <person name="Oshima K."/>
            <person name="Nakanishi Y."/>
            <person name="Yoshimura K."/>
            <person name="Tobe T."/>
            <person name="Clarke J.M."/>
            <person name="Topping D.L."/>
            <person name="Suzuki T."/>
            <person name="Taylor T.D."/>
            <person name="Itoh K."/>
            <person name="Kikuchi J."/>
            <person name="Morita H."/>
            <person name="Hattori M."/>
            <person name="Ohno H."/>
        </authorList>
    </citation>
    <scope>NUCLEOTIDE SEQUENCE [LARGE SCALE GENOMIC DNA]</scope>
    <source>
        <strain>ATCC 15707 / DSM 20219 / CCUG 28903 / JCM 1217 / NCIMB 702259 / NCTC 11818 / E194b</strain>
    </source>
</reference>